<comment type="function">
    <text evidence="1">One of the primary rRNA binding proteins, this protein initially binds near the 5'-end of the 23S rRNA. It is important during the early stages of 50S assembly. It makes multiple contacts with different domains of the 23S rRNA in the assembled 50S subunit and ribosome.</text>
</comment>
<comment type="function">
    <text evidence="1">Forms part of the polypeptide exit tunnel.</text>
</comment>
<comment type="subunit">
    <text evidence="1">Part of the 50S ribosomal subunit.</text>
</comment>
<comment type="similarity">
    <text evidence="1">Belongs to the universal ribosomal protein uL4 family.</text>
</comment>
<evidence type="ECO:0000255" key="1">
    <source>
        <dbReference type="HAMAP-Rule" id="MF_01328"/>
    </source>
</evidence>
<evidence type="ECO:0000256" key="2">
    <source>
        <dbReference type="SAM" id="MobiDB-lite"/>
    </source>
</evidence>
<evidence type="ECO:0000305" key="3"/>
<name>RL4_MACCJ</name>
<keyword id="KW-1185">Reference proteome</keyword>
<keyword id="KW-0687">Ribonucleoprotein</keyword>
<keyword id="KW-0689">Ribosomal protein</keyword>
<keyword id="KW-0694">RNA-binding</keyword>
<keyword id="KW-0699">rRNA-binding</keyword>
<protein>
    <recommendedName>
        <fullName evidence="1">Large ribosomal subunit protein uL4</fullName>
    </recommendedName>
    <alternativeName>
        <fullName evidence="3">50S ribosomal protein L4</fullName>
    </alternativeName>
</protein>
<feature type="chain" id="PRO_1000166013" description="Large ribosomal subunit protein uL4">
    <location>
        <begin position="1"/>
        <end position="207"/>
    </location>
</feature>
<feature type="region of interest" description="Disordered" evidence="2">
    <location>
        <begin position="50"/>
        <end position="76"/>
    </location>
</feature>
<sequence length="207" mass="22617">MANYDVLKVDGTKAGSIELNDNVFGIEPNQHVLFEAINLQRASMRQGTHAVKNRSAVSGGGRKPWKQKGTGRARQGTIRAPQWRGGGIVFGPTPRSYSYKMPKKMRRLALRSALSAKVQENAFTVLESLTFDAPKTKEFKNMTTTLELPKKVLFVVEAEDVNVALSARNIPGVTVITTTGLNVLDIVHANQVVMTKGAVEKVEEVLG</sequence>
<reference key="1">
    <citation type="journal article" date="2009" name="J. Bacteriol.">
        <title>Complete genome sequence of Macrococcus caseolyticus strain JCSCS5402, reflecting the ancestral genome of the human-pathogenic staphylococci.</title>
        <authorList>
            <person name="Baba T."/>
            <person name="Kuwahara-Arai K."/>
            <person name="Uchiyama I."/>
            <person name="Takeuchi F."/>
            <person name="Ito T."/>
            <person name="Hiramatsu K."/>
        </authorList>
    </citation>
    <scope>NUCLEOTIDE SEQUENCE [LARGE SCALE GENOMIC DNA]</scope>
    <source>
        <strain>JCSC5402</strain>
    </source>
</reference>
<proteinExistence type="inferred from homology"/>
<dbReference type="EMBL" id="AP009484">
    <property type="protein sequence ID" value="BAH16903.1"/>
    <property type="molecule type" value="Genomic_DNA"/>
</dbReference>
<dbReference type="RefSeq" id="WP_012656107.1">
    <property type="nucleotide sequence ID" value="NC_011999.1"/>
</dbReference>
<dbReference type="SMR" id="B9E9J2"/>
<dbReference type="STRING" id="458233.MCCL_0196"/>
<dbReference type="GeneID" id="61130618"/>
<dbReference type="KEGG" id="mcl:MCCL_0196"/>
<dbReference type="eggNOG" id="COG0088">
    <property type="taxonomic scope" value="Bacteria"/>
</dbReference>
<dbReference type="HOGENOM" id="CLU_041575_5_2_9"/>
<dbReference type="OrthoDB" id="9803201at2"/>
<dbReference type="Proteomes" id="UP000001383">
    <property type="component" value="Chromosome"/>
</dbReference>
<dbReference type="GO" id="GO:1990904">
    <property type="term" value="C:ribonucleoprotein complex"/>
    <property type="evidence" value="ECO:0007669"/>
    <property type="project" value="UniProtKB-KW"/>
</dbReference>
<dbReference type="GO" id="GO:0005840">
    <property type="term" value="C:ribosome"/>
    <property type="evidence" value="ECO:0007669"/>
    <property type="project" value="UniProtKB-KW"/>
</dbReference>
<dbReference type="GO" id="GO:0019843">
    <property type="term" value="F:rRNA binding"/>
    <property type="evidence" value="ECO:0007669"/>
    <property type="project" value="UniProtKB-UniRule"/>
</dbReference>
<dbReference type="GO" id="GO:0003735">
    <property type="term" value="F:structural constituent of ribosome"/>
    <property type="evidence" value="ECO:0007669"/>
    <property type="project" value="InterPro"/>
</dbReference>
<dbReference type="GO" id="GO:0006412">
    <property type="term" value="P:translation"/>
    <property type="evidence" value="ECO:0007669"/>
    <property type="project" value="UniProtKB-UniRule"/>
</dbReference>
<dbReference type="FunFam" id="3.40.1370.10:FF:000003">
    <property type="entry name" value="50S ribosomal protein L4"/>
    <property type="match status" value="1"/>
</dbReference>
<dbReference type="Gene3D" id="3.40.1370.10">
    <property type="match status" value="1"/>
</dbReference>
<dbReference type="HAMAP" id="MF_01328_B">
    <property type="entry name" value="Ribosomal_uL4_B"/>
    <property type="match status" value="1"/>
</dbReference>
<dbReference type="InterPro" id="IPR002136">
    <property type="entry name" value="Ribosomal_uL4"/>
</dbReference>
<dbReference type="InterPro" id="IPR013005">
    <property type="entry name" value="Ribosomal_uL4-like"/>
</dbReference>
<dbReference type="InterPro" id="IPR023574">
    <property type="entry name" value="Ribosomal_uL4_dom_sf"/>
</dbReference>
<dbReference type="NCBIfam" id="TIGR03953">
    <property type="entry name" value="rplD_bact"/>
    <property type="match status" value="1"/>
</dbReference>
<dbReference type="PANTHER" id="PTHR10746">
    <property type="entry name" value="50S RIBOSOMAL PROTEIN L4"/>
    <property type="match status" value="1"/>
</dbReference>
<dbReference type="PANTHER" id="PTHR10746:SF6">
    <property type="entry name" value="LARGE RIBOSOMAL SUBUNIT PROTEIN UL4M"/>
    <property type="match status" value="1"/>
</dbReference>
<dbReference type="Pfam" id="PF00573">
    <property type="entry name" value="Ribosomal_L4"/>
    <property type="match status" value="1"/>
</dbReference>
<dbReference type="SUPFAM" id="SSF52166">
    <property type="entry name" value="Ribosomal protein L4"/>
    <property type="match status" value="1"/>
</dbReference>
<organism>
    <name type="scientific">Macrococcus caseolyticus (strain JCSC5402)</name>
    <name type="common">Macrococcoides caseolyticum</name>
    <dbReference type="NCBI Taxonomy" id="458233"/>
    <lineage>
        <taxon>Bacteria</taxon>
        <taxon>Bacillati</taxon>
        <taxon>Bacillota</taxon>
        <taxon>Bacilli</taxon>
        <taxon>Bacillales</taxon>
        <taxon>Staphylococcaceae</taxon>
        <taxon>Macrococcoides</taxon>
    </lineage>
</organism>
<gene>
    <name evidence="1" type="primary">rplD</name>
    <name type="ordered locus">MCCL_0196</name>
</gene>
<accession>B9E9J2</accession>